<keyword id="KW-0007">Acetylation</keyword>
<keyword id="KW-0009">Actin-binding</keyword>
<keyword id="KW-1003">Cell membrane</keyword>
<keyword id="KW-1017">Isopeptide bond</keyword>
<keyword id="KW-0472">Membrane</keyword>
<keyword id="KW-0488">Methylation</keyword>
<keyword id="KW-0597">Phosphoprotein</keyword>
<keyword id="KW-1185">Reference proteome</keyword>
<keyword id="KW-0832">Ubl conjugation</keyword>
<sequence length="475" mass="51628">MADMQNLVERLERAVGRLEAVSHTSDMHRGYGDSPSKAGAAPYVQAFDSLLAGPVAEYLKISKEIGGDVQKHAEMVHTGLKLERALLVTASQCQQPADNKLSDLLAPISEQIKEVITFREKNRGSKLFNHLSAVSESIQALGWVAMAPKPGPYVKEMNDAAMFYTNRVLKEYKDVDKKHVDWVKAYLSIWTELQAYIKEFHTTGLVWSKTGPVAKELSGLPSGPSAGSGPPPPPPGPPPPPVSTSSGSDESASRSALFAQINQGESITHALKHVSDDMKTHKNPALKAQSGPVRSGPKPFSAPKPQTSPSPKPATKKEPAVLELEGKKWRVENQENVSNLVIDDTELKQVAYIYKCVNTTLQIKGKINSITVDNCKKLGLVFDDVVGIVEIINSRDVKVQVMGKVPTISINKTDGCHAYLSKNSLDCEIVSAKSSEMNVLIPTEGGDFNEFPVPEQFKTLWNGQKLVTTVTEIAG</sequence>
<organism>
    <name type="scientific">Macaca fascicularis</name>
    <name type="common">Crab-eating macaque</name>
    <name type="synonym">Cynomolgus monkey</name>
    <dbReference type="NCBI Taxonomy" id="9541"/>
    <lineage>
        <taxon>Eukaryota</taxon>
        <taxon>Metazoa</taxon>
        <taxon>Chordata</taxon>
        <taxon>Craniata</taxon>
        <taxon>Vertebrata</taxon>
        <taxon>Euteleostomi</taxon>
        <taxon>Mammalia</taxon>
        <taxon>Eutheria</taxon>
        <taxon>Euarchontoglires</taxon>
        <taxon>Primates</taxon>
        <taxon>Haplorrhini</taxon>
        <taxon>Catarrhini</taxon>
        <taxon>Cercopithecidae</taxon>
        <taxon>Cercopithecinae</taxon>
        <taxon>Macaca</taxon>
    </lineage>
</organism>
<name>CAP1_MACFA</name>
<feature type="initiator methionine" description="Removed" evidence="3">
    <location>
        <position position="1"/>
    </location>
</feature>
<feature type="chain" id="PRO_0000271434" description="Adenylyl cyclase-associated protein 1">
    <location>
        <begin position="2"/>
        <end position="475"/>
    </location>
</feature>
<feature type="domain" description="C-CAP/cofactor C-like" evidence="4">
    <location>
        <begin position="313"/>
        <end position="453"/>
    </location>
</feature>
<feature type="region of interest" description="Disordered" evidence="5">
    <location>
        <begin position="216"/>
        <end position="255"/>
    </location>
</feature>
<feature type="region of interest" description="Disordered" evidence="5">
    <location>
        <begin position="278"/>
        <end position="318"/>
    </location>
</feature>
<feature type="compositionally biased region" description="Low complexity" evidence="5">
    <location>
        <begin position="218"/>
        <end position="228"/>
    </location>
</feature>
<feature type="compositionally biased region" description="Pro residues" evidence="5">
    <location>
        <begin position="229"/>
        <end position="242"/>
    </location>
</feature>
<feature type="compositionally biased region" description="Low complexity" evidence="5">
    <location>
        <begin position="243"/>
        <end position="255"/>
    </location>
</feature>
<feature type="compositionally biased region" description="Pro residues" evidence="5">
    <location>
        <begin position="300"/>
        <end position="312"/>
    </location>
</feature>
<feature type="modified residue" description="N-acetylalanine" evidence="3">
    <location>
        <position position="2"/>
    </location>
</feature>
<feature type="modified residue" description="Phosphotyrosine" evidence="2">
    <location>
        <position position="31"/>
    </location>
</feature>
<feature type="modified residue" description="Phosphoserine" evidence="3">
    <location>
        <position position="34"/>
    </location>
</feature>
<feature type="modified residue" description="N6-acetyllysine" evidence="3">
    <location>
        <position position="81"/>
    </location>
</feature>
<feature type="modified residue" description="N6-methyllysine" evidence="3">
    <location>
        <position position="287"/>
    </location>
</feature>
<feature type="modified residue" description="Phosphoserine" evidence="3">
    <location>
        <position position="290"/>
    </location>
</feature>
<feature type="modified residue" description="Phosphoserine" evidence="3">
    <location>
        <position position="295"/>
    </location>
</feature>
<feature type="modified residue" description="Phosphoserine" evidence="3">
    <location>
        <position position="301"/>
    </location>
</feature>
<feature type="modified residue" description="Phosphothreonine" evidence="3">
    <location>
        <position position="307"/>
    </location>
</feature>
<feature type="modified residue" description="Phosphoserine" evidence="3">
    <location>
        <position position="308"/>
    </location>
</feature>
<feature type="modified residue" description="Phosphoserine" evidence="3">
    <location>
        <position position="310"/>
    </location>
</feature>
<feature type="cross-link" description="Glycyl lysine isopeptide (Lys-Gly) (interchain with G-Cter in SUMO1)" evidence="3">
    <location>
        <position position="348"/>
    </location>
</feature>
<proteinExistence type="evidence at transcript level"/>
<reference key="1">
    <citation type="submission" date="2005-06" db="EMBL/GenBank/DDBJ databases">
        <title>DNA sequences of macaque genes expressed in brain or testis and its evolutionary implications.</title>
        <authorList>
            <consortium name="International consortium for macaque cDNA sequencing and analysis"/>
        </authorList>
    </citation>
    <scope>NUCLEOTIDE SEQUENCE [LARGE SCALE MRNA]</scope>
    <source>
        <tissue>Temporal cortex</tissue>
    </source>
</reference>
<accession>Q4R4I6</accession>
<protein>
    <recommendedName>
        <fullName>Adenylyl cyclase-associated protein 1</fullName>
        <shortName>CAP 1</shortName>
    </recommendedName>
</protein>
<dbReference type="EMBL" id="AB169908">
    <property type="protein sequence ID" value="BAE01989.1"/>
    <property type="molecule type" value="mRNA"/>
</dbReference>
<dbReference type="SMR" id="Q4R4I6"/>
<dbReference type="STRING" id="9541.ENSMFAP00000031200"/>
<dbReference type="eggNOG" id="KOG2675">
    <property type="taxonomic scope" value="Eukaryota"/>
</dbReference>
<dbReference type="Proteomes" id="UP000233100">
    <property type="component" value="Unplaced"/>
</dbReference>
<dbReference type="GO" id="GO:0005737">
    <property type="term" value="C:cytoplasm"/>
    <property type="evidence" value="ECO:0007669"/>
    <property type="project" value="TreeGrafter"/>
</dbReference>
<dbReference type="GO" id="GO:0005886">
    <property type="term" value="C:plasma membrane"/>
    <property type="evidence" value="ECO:0007669"/>
    <property type="project" value="UniProtKB-SubCell"/>
</dbReference>
<dbReference type="GO" id="GO:0003779">
    <property type="term" value="F:actin binding"/>
    <property type="evidence" value="ECO:0007669"/>
    <property type="project" value="UniProtKB-KW"/>
</dbReference>
<dbReference type="GO" id="GO:0008179">
    <property type="term" value="F:adenylate cyclase binding"/>
    <property type="evidence" value="ECO:0007669"/>
    <property type="project" value="TreeGrafter"/>
</dbReference>
<dbReference type="GO" id="GO:0007015">
    <property type="term" value="P:actin filament organization"/>
    <property type="evidence" value="ECO:0007669"/>
    <property type="project" value="TreeGrafter"/>
</dbReference>
<dbReference type="GO" id="GO:0019933">
    <property type="term" value="P:cAMP-mediated signaling"/>
    <property type="evidence" value="ECO:0007669"/>
    <property type="project" value="TreeGrafter"/>
</dbReference>
<dbReference type="GO" id="GO:0000902">
    <property type="term" value="P:cell morphogenesis"/>
    <property type="evidence" value="ECO:0007669"/>
    <property type="project" value="TreeGrafter"/>
</dbReference>
<dbReference type="FunFam" id="1.25.40.330:FF:000001">
    <property type="entry name" value="Adenylyl cyclase-associated protein"/>
    <property type="match status" value="1"/>
</dbReference>
<dbReference type="FunFam" id="2.160.20.70:FF:000001">
    <property type="entry name" value="Adenylyl cyclase-associated protein"/>
    <property type="match status" value="1"/>
</dbReference>
<dbReference type="Gene3D" id="2.160.20.70">
    <property type="match status" value="1"/>
</dbReference>
<dbReference type="Gene3D" id="1.25.40.330">
    <property type="entry name" value="Adenylate cyclase-associated CAP, N-terminal domain"/>
    <property type="match status" value="1"/>
</dbReference>
<dbReference type="InterPro" id="IPR001837">
    <property type="entry name" value="Adenylate_cyclase-assoc_CAP"/>
</dbReference>
<dbReference type="InterPro" id="IPR013912">
    <property type="entry name" value="Adenylate_cyclase-assoc_CAP_C"/>
</dbReference>
<dbReference type="InterPro" id="IPR013992">
    <property type="entry name" value="Adenylate_cyclase-assoc_CAP_N"/>
</dbReference>
<dbReference type="InterPro" id="IPR017901">
    <property type="entry name" value="C-CAP_CF_C-like"/>
</dbReference>
<dbReference type="InterPro" id="IPR016098">
    <property type="entry name" value="CAP/MinC_C"/>
</dbReference>
<dbReference type="InterPro" id="IPR036223">
    <property type="entry name" value="CAP_C_sf"/>
</dbReference>
<dbReference type="InterPro" id="IPR028417">
    <property type="entry name" value="CAP_CS_C"/>
</dbReference>
<dbReference type="InterPro" id="IPR018106">
    <property type="entry name" value="CAP_CS_N"/>
</dbReference>
<dbReference type="InterPro" id="IPR053950">
    <property type="entry name" value="CAP_N"/>
</dbReference>
<dbReference type="InterPro" id="IPR036222">
    <property type="entry name" value="CAP_N_sf"/>
</dbReference>
<dbReference type="InterPro" id="IPR006599">
    <property type="entry name" value="CARP_motif"/>
</dbReference>
<dbReference type="PANTHER" id="PTHR10652">
    <property type="entry name" value="ADENYLYL CYCLASE-ASSOCIATED PROTEIN"/>
    <property type="match status" value="1"/>
</dbReference>
<dbReference type="PANTHER" id="PTHR10652:SF1">
    <property type="entry name" value="ADENYLYL CYCLASE-ASSOCIATED PROTEIN 1"/>
    <property type="match status" value="1"/>
</dbReference>
<dbReference type="Pfam" id="PF08603">
    <property type="entry name" value="CAP_C"/>
    <property type="match status" value="1"/>
</dbReference>
<dbReference type="Pfam" id="PF21938">
    <property type="entry name" value="CAP_N"/>
    <property type="match status" value="1"/>
</dbReference>
<dbReference type="Pfam" id="PF01213">
    <property type="entry name" value="CAP_N-CM"/>
    <property type="match status" value="1"/>
</dbReference>
<dbReference type="SMART" id="SM00673">
    <property type="entry name" value="CARP"/>
    <property type="match status" value="2"/>
</dbReference>
<dbReference type="SUPFAM" id="SSF69340">
    <property type="entry name" value="C-terminal domain of adenylylcyclase associated protein"/>
    <property type="match status" value="1"/>
</dbReference>
<dbReference type="SUPFAM" id="SSF101278">
    <property type="entry name" value="N-terminal domain of adenylylcyclase associated protein, CAP"/>
    <property type="match status" value="1"/>
</dbReference>
<dbReference type="PROSITE" id="PS51329">
    <property type="entry name" value="C_CAP_COFACTOR_C"/>
    <property type="match status" value="1"/>
</dbReference>
<dbReference type="PROSITE" id="PS01088">
    <property type="entry name" value="CAP_1"/>
    <property type="match status" value="1"/>
</dbReference>
<dbReference type="PROSITE" id="PS01089">
    <property type="entry name" value="CAP_2"/>
    <property type="match status" value="1"/>
</dbReference>
<comment type="function">
    <text evidence="1">Directly regulates filament dynamics and has been implicated in a number of complex developmental and morphological processes, including mRNA localization and the establishment of cell polarity.</text>
</comment>
<comment type="subunit">
    <text evidence="1">Homodimer. Binds actin monomers (By similarity).</text>
</comment>
<comment type="subcellular location">
    <subcellularLocation>
        <location evidence="1">Cell membrane</location>
        <topology evidence="1">Peripheral membrane protein</topology>
    </subcellularLocation>
</comment>
<comment type="similarity">
    <text evidence="6">Belongs to the CAP family.</text>
</comment>
<evidence type="ECO:0000250" key="1"/>
<evidence type="ECO:0000250" key="2">
    <source>
        <dbReference type="UniProtKB" id="P40124"/>
    </source>
</evidence>
<evidence type="ECO:0000250" key="3">
    <source>
        <dbReference type="UniProtKB" id="Q01518"/>
    </source>
</evidence>
<evidence type="ECO:0000255" key="4">
    <source>
        <dbReference type="PROSITE-ProRule" id="PRU00659"/>
    </source>
</evidence>
<evidence type="ECO:0000256" key="5">
    <source>
        <dbReference type="SAM" id="MobiDB-lite"/>
    </source>
</evidence>
<evidence type="ECO:0000305" key="6"/>
<gene>
    <name type="primary">CAP1</name>
    <name type="ORF">QtrA-13003</name>
</gene>